<proteinExistence type="inferred from homology"/>
<name>SCX4A_TITFA</name>
<organism>
    <name type="scientific">Tityus fasciolatus</name>
    <name type="common">Central Brazilian scorpion</name>
    <dbReference type="NCBI Taxonomy" id="203543"/>
    <lineage>
        <taxon>Eukaryota</taxon>
        <taxon>Metazoa</taxon>
        <taxon>Ecdysozoa</taxon>
        <taxon>Arthropoda</taxon>
        <taxon>Chelicerata</taxon>
        <taxon>Arachnida</taxon>
        <taxon>Scorpiones</taxon>
        <taxon>Buthida</taxon>
        <taxon>Buthoidea</taxon>
        <taxon>Buthidae</taxon>
        <taxon>Tityus</taxon>
    </lineage>
</organism>
<dbReference type="SMR" id="P0DQH6"/>
<dbReference type="GO" id="GO:0005576">
    <property type="term" value="C:extracellular region"/>
    <property type="evidence" value="ECO:0007669"/>
    <property type="project" value="UniProtKB-SubCell"/>
</dbReference>
<dbReference type="GO" id="GO:0019871">
    <property type="term" value="F:sodium channel inhibitor activity"/>
    <property type="evidence" value="ECO:0007669"/>
    <property type="project" value="InterPro"/>
</dbReference>
<dbReference type="GO" id="GO:0090729">
    <property type="term" value="F:toxin activity"/>
    <property type="evidence" value="ECO:0007669"/>
    <property type="project" value="UniProtKB-KW"/>
</dbReference>
<dbReference type="GO" id="GO:0006952">
    <property type="term" value="P:defense response"/>
    <property type="evidence" value="ECO:0007669"/>
    <property type="project" value="InterPro"/>
</dbReference>
<dbReference type="CDD" id="cd23106">
    <property type="entry name" value="neurotoxins_LC_scorpion"/>
    <property type="match status" value="1"/>
</dbReference>
<dbReference type="FunFam" id="3.30.30.10:FF:000002">
    <property type="entry name" value="Alpha-like toxin BmK-M1"/>
    <property type="match status" value="1"/>
</dbReference>
<dbReference type="Gene3D" id="3.30.30.10">
    <property type="entry name" value="Knottin, scorpion toxin-like"/>
    <property type="match status" value="1"/>
</dbReference>
<dbReference type="InterPro" id="IPR044062">
    <property type="entry name" value="LCN-type_CS_alpha_beta_dom"/>
</dbReference>
<dbReference type="InterPro" id="IPR003614">
    <property type="entry name" value="Scorpion_toxin-like"/>
</dbReference>
<dbReference type="InterPro" id="IPR036574">
    <property type="entry name" value="Scorpion_toxin-like_sf"/>
</dbReference>
<dbReference type="InterPro" id="IPR018218">
    <property type="entry name" value="Scorpion_toxinL"/>
</dbReference>
<dbReference type="InterPro" id="IPR002061">
    <property type="entry name" value="Scorpion_toxinL/defensin"/>
</dbReference>
<dbReference type="Pfam" id="PF00537">
    <property type="entry name" value="Toxin_3"/>
    <property type="match status" value="1"/>
</dbReference>
<dbReference type="PRINTS" id="PR00285">
    <property type="entry name" value="SCORPNTOXIN"/>
</dbReference>
<dbReference type="SMART" id="SM00505">
    <property type="entry name" value="Knot1"/>
    <property type="match status" value="1"/>
</dbReference>
<dbReference type="SUPFAM" id="SSF57095">
    <property type="entry name" value="Scorpion toxin-like"/>
    <property type="match status" value="1"/>
</dbReference>
<dbReference type="PROSITE" id="PS51863">
    <property type="entry name" value="LCN_CSAB"/>
    <property type="match status" value="1"/>
</dbReference>
<protein>
    <recommendedName>
        <fullName evidence="5">Beta-toxin Tf4a</fullName>
    </recommendedName>
</protein>
<comment type="function">
    <text evidence="2">Alpha toxins bind voltage-independently at site-3 of sodium channels (Nav) and inhibit the inactivation of the activated channels, thereby blocking neuronal transmission. This toxin is toxic to frogs but non-toxic to insect larvae (T.molitor), mammals (rats) and crustaceans (crabs) at the doses assayed.</text>
</comment>
<comment type="subcellular location">
    <subcellularLocation>
        <location evidence="7">Secreted</location>
    </subcellularLocation>
</comment>
<comment type="tissue specificity">
    <text evidence="7">Expressed by the venom gland.</text>
</comment>
<comment type="domain">
    <text evidence="6">Has the structural arrangement of an alpha-helix connected to antiparallel beta-sheets by disulfide bonds (CS-alpha/beta).</text>
</comment>
<comment type="similarity">
    <text evidence="6">Belongs to the long (4 C-C) scorpion toxin superfamily. Sodium channel inhibitor family. Alpha subfamily.</text>
</comment>
<reference key="1">
    <citation type="journal article" date="2015" name="Toxicon">
        <title>General characterization of Tityus fasciolatus scorpion venom. Molecular identification of toxins and localization of linear B-cell epitopes.</title>
        <authorList>
            <person name="Mendes T.M."/>
            <person name="Guimaraes-Okamoto P.T."/>
            <person name="Machado-de-Avila R.A."/>
            <person name="Oliveira D."/>
            <person name="Melo M.M."/>
            <person name="Lobato Z.I."/>
            <person name="Kalapothakis E."/>
            <person name="Chavez-Olortegui C."/>
        </authorList>
    </citation>
    <scope>NUCLEOTIDE SEQUENCE [MRNA]</scope>
    <source>
        <tissue>Venom gland</tissue>
    </source>
</reference>
<sequence>GKEGYPADSKGCKVTCFFTGVGYCDKECKLKKASSGYCAWPACYCYGLPDSASVWDSATNKCGKK</sequence>
<feature type="chain" id="PRO_0000447416" description="Beta-toxin Tf4a" evidence="4">
    <location>
        <begin position="1"/>
        <end position="62"/>
    </location>
</feature>
<feature type="domain" description="LCN-type CS-alpha/beta" evidence="3">
    <location>
        <begin position="2"/>
        <end position="63"/>
    </location>
</feature>
<feature type="modified residue" description="Cysteine amide" evidence="1">
    <location>
        <position position="62"/>
    </location>
</feature>
<feature type="disulfide bond" evidence="3">
    <location>
        <begin position="12"/>
        <end position="62"/>
    </location>
</feature>
<feature type="disulfide bond" evidence="3">
    <location>
        <begin position="16"/>
        <end position="38"/>
    </location>
</feature>
<feature type="disulfide bond" evidence="3">
    <location>
        <begin position="24"/>
        <end position="43"/>
    </location>
</feature>
<feature type="disulfide bond" evidence="3">
    <location>
        <begin position="28"/>
        <end position="45"/>
    </location>
</feature>
<evidence type="ECO:0000250" key="1">
    <source>
        <dbReference type="UniProtKB" id="P01484"/>
    </source>
</evidence>
<evidence type="ECO:0000250" key="2">
    <source>
        <dbReference type="UniProtKB" id="P83435"/>
    </source>
</evidence>
<evidence type="ECO:0000255" key="3">
    <source>
        <dbReference type="PROSITE-ProRule" id="PRU01210"/>
    </source>
</evidence>
<evidence type="ECO:0000269" key="4">
    <source>
    </source>
</evidence>
<evidence type="ECO:0000303" key="5">
    <source>
    </source>
</evidence>
<evidence type="ECO:0000305" key="6"/>
<evidence type="ECO:0000305" key="7">
    <source>
    </source>
</evidence>
<keyword id="KW-0027">Amidation</keyword>
<keyword id="KW-1015">Disulfide bond</keyword>
<keyword id="KW-0872">Ion channel impairing toxin</keyword>
<keyword id="KW-0528">Neurotoxin</keyword>
<keyword id="KW-0964">Secreted</keyword>
<keyword id="KW-0800">Toxin</keyword>
<keyword id="KW-0738">Voltage-gated sodium channel impairing toxin</keyword>
<accession>P0DQH6</accession>